<reference key="1">
    <citation type="journal article" date="2003" name="Mol. Microbiol.">
        <title>Genome-based analysis of virulence genes in a non-biofilm-forming Staphylococcus epidermidis strain (ATCC 12228).</title>
        <authorList>
            <person name="Zhang Y.-Q."/>
            <person name="Ren S.-X."/>
            <person name="Li H.-L."/>
            <person name="Wang Y.-X."/>
            <person name="Fu G."/>
            <person name="Yang J."/>
            <person name="Qin Z.-Q."/>
            <person name="Miao Y.-G."/>
            <person name="Wang W.-Y."/>
            <person name="Chen R.-S."/>
            <person name="Shen Y."/>
            <person name="Chen Z."/>
            <person name="Yuan Z.-H."/>
            <person name="Zhao G.-P."/>
            <person name="Qu D."/>
            <person name="Danchin A."/>
            <person name="Wen Y.-M."/>
        </authorList>
    </citation>
    <scope>NUCLEOTIDE SEQUENCE [LARGE SCALE GENOMIC DNA]</scope>
    <source>
        <strain>ATCC 12228 / FDA PCI 1200</strain>
    </source>
</reference>
<feature type="signal peptide" evidence="2">
    <location>
        <begin position="1"/>
        <end position="25"/>
    </location>
</feature>
<feature type="chain" id="PRO_0000231628" description="N-acetylmuramoyl-L-alanine amidase sle1">
    <location>
        <begin position="26"/>
        <end position="324"/>
    </location>
</feature>
<feature type="domain" description="LysM 1" evidence="4">
    <location>
        <begin position="27"/>
        <end position="70"/>
    </location>
</feature>
<feature type="domain" description="LysM 2" evidence="4">
    <location>
        <begin position="84"/>
        <end position="127"/>
    </location>
</feature>
<feature type="domain" description="LysM 3" evidence="4">
    <location>
        <begin position="147"/>
        <end position="190"/>
    </location>
</feature>
<feature type="domain" description="Peptidase C51" evidence="3">
    <location>
        <begin position="200"/>
        <end position="324"/>
    </location>
</feature>
<keyword id="KW-0929">Antimicrobial</keyword>
<keyword id="KW-0081">Bacteriolytic enzyme</keyword>
<keyword id="KW-0131">Cell cycle</keyword>
<keyword id="KW-0132">Cell division</keyword>
<keyword id="KW-0961">Cell wall biogenesis/degradation</keyword>
<keyword id="KW-0378">Hydrolase</keyword>
<keyword id="KW-0677">Repeat</keyword>
<keyword id="KW-0964">Secreted</keyword>
<keyword id="KW-0717">Septation</keyword>
<keyword id="KW-0732">Signal</keyword>
<keyword id="KW-0843">Virulence</keyword>
<sequence length="324" mass="35075">MQKKYITAIIGTTALSALASTHAQAATTHTVKSGESVWSISHKYGISIAKLKSLNGLTSNLIFPNQVLKVSGSSSRATSTNSGTVYTVKAGDSLSSIAAKYGTTYQKIMQLNGLNNYLIFPGQKLKVSGKATSSSRAKASGSSGRTATYTVKYGDSLSAIASKYGTTYQKIMQLNGLTNFFIYPGQKLKVPGGSSSSSSSNNTRSNGGYYSPTFNHQNLYTWGQCTWHVFNRRAEIGKGISTYWWNANNWDNASAADGYTIDYRPTVGSIAQTDAGYYGHVAFVERVNSDGSILVSEMNWSAAPGNMTYRTIPAYQVRNYKFIH</sequence>
<evidence type="ECO:0000250" key="1"/>
<evidence type="ECO:0000255" key="2"/>
<evidence type="ECO:0000255" key="3">
    <source>
        <dbReference type="PROSITE-ProRule" id="PRU00048"/>
    </source>
</evidence>
<evidence type="ECO:0000255" key="4">
    <source>
        <dbReference type="PROSITE-ProRule" id="PRU01118"/>
    </source>
</evidence>
<organism>
    <name type="scientific">Staphylococcus epidermidis (strain ATCC 12228 / FDA PCI 1200)</name>
    <dbReference type="NCBI Taxonomy" id="176280"/>
    <lineage>
        <taxon>Bacteria</taxon>
        <taxon>Bacillati</taxon>
        <taxon>Bacillota</taxon>
        <taxon>Bacilli</taxon>
        <taxon>Bacillales</taxon>
        <taxon>Staphylococcaceae</taxon>
        <taxon>Staphylococcus</taxon>
    </lineage>
</organism>
<proteinExistence type="inferred from homology"/>
<comment type="function">
    <text evidence="1">Peptidoglycan hydrolase involved in the splitting of the septum during cell division.</text>
</comment>
<comment type="catalytic activity">
    <reaction>
        <text>Hydrolyzes the link between N-acetylmuramoyl residues and L-amino acid residues in certain cell-wall glycopeptides.</text>
        <dbReference type="EC" id="3.5.1.28"/>
    </reaction>
</comment>
<comment type="subcellular location">
    <subcellularLocation>
        <location evidence="1">Secreted</location>
    </subcellularLocation>
    <subcellularLocation>
        <location evidence="1">Cell surface</location>
    </subcellularLocation>
</comment>
<name>SLE1_STAES</name>
<dbReference type="EC" id="3.5.1.28"/>
<dbReference type="EMBL" id="AE015929">
    <property type="protein sequence ID" value="AAO05961.1"/>
    <property type="molecule type" value="Genomic_DNA"/>
</dbReference>
<dbReference type="RefSeq" id="NP_765874.1">
    <property type="nucleotide sequence ID" value="NC_004461.1"/>
</dbReference>
<dbReference type="SMR" id="Q8CMN2"/>
<dbReference type="CAZy" id="CBM50">
    <property type="family name" value="Carbohydrate-Binding Module Family 50"/>
</dbReference>
<dbReference type="KEGG" id="sep:SE_2319"/>
<dbReference type="PATRIC" id="fig|176280.10.peg.2262"/>
<dbReference type="eggNOG" id="COG1388">
    <property type="taxonomic scope" value="Bacteria"/>
</dbReference>
<dbReference type="eggNOG" id="COG3942">
    <property type="taxonomic scope" value="Bacteria"/>
</dbReference>
<dbReference type="HOGENOM" id="CLU_016043_1_3_9"/>
<dbReference type="OrthoDB" id="9813368at2"/>
<dbReference type="Proteomes" id="UP000001411">
    <property type="component" value="Chromosome"/>
</dbReference>
<dbReference type="GO" id="GO:0009986">
    <property type="term" value="C:cell surface"/>
    <property type="evidence" value="ECO:0007669"/>
    <property type="project" value="UniProtKB-SubCell"/>
</dbReference>
<dbReference type="GO" id="GO:0005576">
    <property type="term" value="C:extracellular region"/>
    <property type="evidence" value="ECO:0007669"/>
    <property type="project" value="UniProtKB-SubCell"/>
</dbReference>
<dbReference type="GO" id="GO:0008932">
    <property type="term" value="F:lytic endotransglycosylase activity"/>
    <property type="evidence" value="ECO:0007669"/>
    <property type="project" value="TreeGrafter"/>
</dbReference>
<dbReference type="GO" id="GO:0008745">
    <property type="term" value="F:N-acetylmuramoyl-L-alanine amidase activity"/>
    <property type="evidence" value="ECO:0007669"/>
    <property type="project" value="UniProtKB-EC"/>
</dbReference>
<dbReference type="GO" id="GO:0071555">
    <property type="term" value="P:cell wall organization"/>
    <property type="evidence" value="ECO:0007669"/>
    <property type="project" value="UniProtKB-KW"/>
</dbReference>
<dbReference type="GO" id="GO:0042742">
    <property type="term" value="P:defense response to bacterium"/>
    <property type="evidence" value="ECO:0007669"/>
    <property type="project" value="UniProtKB-KW"/>
</dbReference>
<dbReference type="GO" id="GO:0000917">
    <property type="term" value="P:division septum assembly"/>
    <property type="evidence" value="ECO:0007669"/>
    <property type="project" value="UniProtKB-KW"/>
</dbReference>
<dbReference type="GO" id="GO:0031640">
    <property type="term" value="P:killing of cells of another organism"/>
    <property type="evidence" value="ECO:0007669"/>
    <property type="project" value="UniProtKB-KW"/>
</dbReference>
<dbReference type="CDD" id="cd00118">
    <property type="entry name" value="LysM"/>
    <property type="match status" value="3"/>
</dbReference>
<dbReference type="Gene3D" id="3.90.1720.10">
    <property type="entry name" value="endopeptidase domain like (from Nostoc punctiforme)"/>
    <property type="match status" value="1"/>
</dbReference>
<dbReference type="Gene3D" id="3.10.350.10">
    <property type="entry name" value="LysM domain"/>
    <property type="match status" value="3"/>
</dbReference>
<dbReference type="InterPro" id="IPR007921">
    <property type="entry name" value="CHAP_dom"/>
</dbReference>
<dbReference type="InterPro" id="IPR018392">
    <property type="entry name" value="LysM_dom"/>
</dbReference>
<dbReference type="InterPro" id="IPR036779">
    <property type="entry name" value="LysM_dom_sf"/>
</dbReference>
<dbReference type="InterPro" id="IPR038765">
    <property type="entry name" value="Papain-like_cys_pep_sf"/>
</dbReference>
<dbReference type="PANTHER" id="PTHR33734">
    <property type="entry name" value="LYSM DOMAIN-CONTAINING GPI-ANCHORED PROTEIN 2"/>
    <property type="match status" value="1"/>
</dbReference>
<dbReference type="PANTHER" id="PTHR33734:SF22">
    <property type="entry name" value="MEMBRANE-BOUND LYTIC MUREIN TRANSGLYCOSYLASE D"/>
    <property type="match status" value="1"/>
</dbReference>
<dbReference type="Pfam" id="PF05257">
    <property type="entry name" value="CHAP"/>
    <property type="match status" value="1"/>
</dbReference>
<dbReference type="Pfam" id="PF01476">
    <property type="entry name" value="LysM"/>
    <property type="match status" value="3"/>
</dbReference>
<dbReference type="SMART" id="SM00257">
    <property type="entry name" value="LysM"/>
    <property type="match status" value="3"/>
</dbReference>
<dbReference type="SUPFAM" id="SSF54001">
    <property type="entry name" value="Cysteine proteinases"/>
    <property type="match status" value="1"/>
</dbReference>
<dbReference type="SUPFAM" id="SSF54106">
    <property type="entry name" value="LysM domain"/>
    <property type="match status" value="3"/>
</dbReference>
<dbReference type="PROSITE" id="PS50911">
    <property type="entry name" value="CHAP"/>
    <property type="match status" value="1"/>
</dbReference>
<dbReference type="PROSITE" id="PS51782">
    <property type="entry name" value="LYSM"/>
    <property type="match status" value="3"/>
</dbReference>
<gene>
    <name type="primary">sle1</name>
    <name type="synonym">aaa</name>
    <name type="ordered locus">SE_2319</name>
</gene>
<accession>Q8CMN2</accession>
<protein>
    <recommendedName>
        <fullName>N-acetylmuramoyl-L-alanine amidase sle1</fullName>
        <ecNumber>3.5.1.28</ecNumber>
    </recommendedName>
</protein>